<gene>
    <name type="primary">GRP</name>
</gene>
<keyword id="KW-0027">Amidation</keyword>
<keyword id="KW-0165">Cleavage on pair of basic residues</keyword>
<keyword id="KW-0968">Cytoplasmic vesicle</keyword>
<keyword id="KW-0903">Direct protein sequencing</keyword>
<keyword id="KW-1185">Reference proteome</keyword>
<keyword id="KW-0964">Secreted</keyword>
<keyword id="KW-0732">Signal</keyword>
<reference evidence="7" key="1">
    <citation type="journal article" date="2004" name="Nature">
        <title>Sequence and comparative analysis of the chicken genome provide unique perspectives on vertebrate evolution.</title>
        <authorList>
            <person name="Hillier L.W."/>
            <person name="Miller W."/>
            <person name="Birney E."/>
            <person name="Warren W."/>
            <person name="Hardison R.C."/>
            <person name="Ponting C.P."/>
            <person name="Bork P."/>
            <person name="Burt D.W."/>
            <person name="Groenen M.A.M."/>
            <person name="Delany M.E."/>
            <person name="Dodgson J.B."/>
            <person name="Chinwalla A.T."/>
            <person name="Cliften P.F."/>
            <person name="Clifton S.W."/>
            <person name="Delehaunty K.D."/>
            <person name="Fronick C."/>
            <person name="Fulton R.S."/>
            <person name="Graves T.A."/>
            <person name="Kremitzki C."/>
            <person name="Layman D."/>
            <person name="Magrini V."/>
            <person name="McPherson J.D."/>
            <person name="Miner T.L."/>
            <person name="Minx P."/>
            <person name="Nash W.E."/>
            <person name="Nhan M.N."/>
            <person name="Nelson J.O."/>
            <person name="Oddy L.G."/>
            <person name="Pohl C.S."/>
            <person name="Randall-Maher J."/>
            <person name="Smith S.M."/>
            <person name="Wallis J.W."/>
            <person name="Yang S.-P."/>
            <person name="Romanov M.N."/>
            <person name="Rondelli C.M."/>
            <person name="Paton B."/>
            <person name="Smith J."/>
            <person name="Morrice D."/>
            <person name="Daniels L."/>
            <person name="Tempest H.G."/>
            <person name="Robertson L."/>
            <person name="Masabanda J.S."/>
            <person name="Griffin D.K."/>
            <person name="Vignal A."/>
            <person name="Fillon V."/>
            <person name="Jacobbson L."/>
            <person name="Kerje S."/>
            <person name="Andersson L."/>
            <person name="Crooijmans R.P."/>
            <person name="Aerts J."/>
            <person name="van der Poel J.J."/>
            <person name="Ellegren H."/>
            <person name="Caldwell R.B."/>
            <person name="Hubbard S.J."/>
            <person name="Grafham D.V."/>
            <person name="Kierzek A.M."/>
            <person name="McLaren S.R."/>
            <person name="Overton I.M."/>
            <person name="Arakawa H."/>
            <person name="Beattie K.J."/>
            <person name="Bezzubov Y."/>
            <person name="Boardman P.E."/>
            <person name="Bonfield J.K."/>
            <person name="Croning M.D.R."/>
            <person name="Davies R.M."/>
            <person name="Francis M.D."/>
            <person name="Humphray S.J."/>
            <person name="Scott C.E."/>
            <person name="Taylor R.G."/>
            <person name="Tickle C."/>
            <person name="Brown W.R.A."/>
            <person name="Rogers J."/>
            <person name="Buerstedde J.-M."/>
            <person name="Wilson S.A."/>
            <person name="Stubbs L."/>
            <person name="Ovcharenko I."/>
            <person name="Gordon L."/>
            <person name="Lucas S."/>
            <person name="Miller M.M."/>
            <person name="Inoko H."/>
            <person name="Shiina T."/>
            <person name="Kaufman J."/>
            <person name="Salomonsen J."/>
            <person name="Skjoedt K."/>
            <person name="Wong G.K.-S."/>
            <person name="Wang J."/>
            <person name="Liu B."/>
            <person name="Wang J."/>
            <person name="Yu J."/>
            <person name="Yang H."/>
            <person name="Nefedov M."/>
            <person name="Koriabine M."/>
            <person name="Dejong P.J."/>
            <person name="Goodstadt L."/>
            <person name="Webber C."/>
            <person name="Dickens N.J."/>
            <person name="Letunic I."/>
            <person name="Suyama M."/>
            <person name="Torrents D."/>
            <person name="von Mering C."/>
            <person name="Zdobnov E.M."/>
            <person name="Makova K."/>
            <person name="Nekrutenko A."/>
            <person name="Elnitski L."/>
            <person name="Eswara P."/>
            <person name="King D.C."/>
            <person name="Yang S.-P."/>
            <person name="Tyekucheva S."/>
            <person name="Radakrishnan A."/>
            <person name="Harris R.S."/>
            <person name="Chiaromonte F."/>
            <person name="Taylor J."/>
            <person name="He J."/>
            <person name="Rijnkels M."/>
            <person name="Griffiths-Jones S."/>
            <person name="Ureta-Vidal A."/>
            <person name="Hoffman M.M."/>
            <person name="Severin J."/>
            <person name="Searle S.M.J."/>
            <person name="Law A.S."/>
            <person name="Speed D."/>
            <person name="Waddington D."/>
            <person name="Cheng Z."/>
            <person name="Tuzun E."/>
            <person name="Eichler E."/>
            <person name="Bao Z."/>
            <person name="Flicek P."/>
            <person name="Shteynberg D.D."/>
            <person name="Brent M.R."/>
            <person name="Bye J.M."/>
            <person name="Huckle E.J."/>
            <person name="Chatterji S."/>
            <person name="Dewey C."/>
            <person name="Pachter L."/>
            <person name="Kouranov A."/>
            <person name="Mourelatos Z."/>
            <person name="Hatzigeorgiou A.G."/>
            <person name="Paterson A.H."/>
            <person name="Ivarie R."/>
            <person name="Brandstrom M."/>
            <person name="Axelsson E."/>
            <person name="Backstrom N."/>
            <person name="Berlin S."/>
            <person name="Webster M.T."/>
            <person name="Pourquie O."/>
            <person name="Reymond A."/>
            <person name="Ucla C."/>
            <person name="Antonarakis S.E."/>
            <person name="Long M."/>
            <person name="Emerson J.J."/>
            <person name="Betran E."/>
            <person name="Dupanloup I."/>
            <person name="Kaessmann H."/>
            <person name="Hinrichs A.S."/>
            <person name="Bejerano G."/>
            <person name="Furey T.S."/>
            <person name="Harte R.A."/>
            <person name="Raney B."/>
            <person name="Siepel A."/>
            <person name="Kent W.J."/>
            <person name="Haussler D."/>
            <person name="Eyras E."/>
            <person name="Castelo R."/>
            <person name="Abril J.F."/>
            <person name="Castellano S."/>
            <person name="Camara F."/>
            <person name="Parra G."/>
            <person name="Guigo R."/>
            <person name="Bourque G."/>
            <person name="Tesler G."/>
            <person name="Pevzner P.A."/>
            <person name="Smit A."/>
            <person name="Fulton L.A."/>
            <person name="Mardis E.R."/>
            <person name="Wilson R.K."/>
        </authorList>
    </citation>
    <scope>NUCLEOTIDE SEQUENCE [LARGE SCALE GENOMIC DNA]</scope>
    <source>
        <strain evidence="7">Red jungle fowl</strain>
    </source>
</reference>
<reference key="2">
    <citation type="journal article" date="1980" name="FEBS Lett.">
        <title>Characterization of an avian gastric (proventricular) peptide having sequence homology with the porcine gastrin-releasing peptide and the amphibian peptides bombesin and alytesin.</title>
        <authorList>
            <person name="McDonald T.J."/>
            <person name="Joernvall H."/>
            <person name="Ghatei M."/>
            <person name="Bloom S.R."/>
            <person name="Mutt V."/>
        </authorList>
    </citation>
    <scope>PROTEIN SEQUENCE OF 28-54</scope>
</reference>
<reference key="3">
    <citation type="journal article" date="1990" name="Biochim. Biophys. Acta">
        <title>Isolation, sequence and biosynthetic significance of a novel fragment of gastrin-releasing peptide from chicken proventriculus.</title>
        <authorList>
            <person name="Campbell B.J."/>
            <person name="Young J."/>
            <person name="Dimaline R."/>
            <person name="Dockray G.J."/>
        </authorList>
    </citation>
    <scope>PROTEIN SEQUENCE OF 28-54</scope>
    <scope>AMIDATION AT MET-54</scope>
    <scope>FUNCTION</scope>
</reference>
<protein>
    <recommendedName>
        <fullName>Gastrin-releasing peptide</fullName>
        <shortName>GRP</shortName>
    </recommendedName>
    <alternativeName>
        <fullName>Proventricular peptide</fullName>
    </alternativeName>
    <component>
        <recommendedName>
            <fullName>Neuromedin-C</fullName>
        </recommendedName>
        <alternativeName>
            <fullName>GRP-10</fullName>
        </alternativeName>
    </component>
</protein>
<sequence>MGGGGPRRPGTLPLLALLALLAAHGGAAPLQPGGSPALTKIYPRGSHWAVGHLMGKKSTGDFPYAYEEENKIPLSASPENIKQLDDYLQREEMSKHLLQLLEGNENKSAHFSKGGLPWHTRNSWETDDSSSWKDVSRTRCVSAFLTVTFCSKVAYQLCPTSALS</sequence>
<evidence type="ECO:0000250" key="1">
    <source>
        <dbReference type="UniProtKB" id="P07492"/>
    </source>
</evidence>
<evidence type="ECO:0000250" key="2">
    <source>
        <dbReference type="UniProtKB" id="P63153"/>
    </source>
</evidence>
<evidence type="ECO:0000250" key="3">
    <source>
        <dbReference type="UniProtKB" id="Q863C3"/>
    </source>
</evidence>
<evidence type="ECO:0000269" key="4">
    <source>
    </source>
</evidence>
<evidence type="ECO:0000269" key="5">
    <source>
    </source>
</evidence>
<evidence type="ECO:0000305" key="6"/>
<evidence type="ECO:0000312" key="7">
    <source>
        <dbReference type="Proteomes" id="UP000000539"/>
    </source>
</evidence>
<proteinExistence type="evidence at protein level"/>
<name>GRP_CHICK</name>
<feature type="signal peptide" evidence="4 5">
    <location>
        <begin position="1"/>
        <end position="27"/>
    </location>
</feature>
<feature type="peptide" id="PRO_0000223263" description="Gastrin-releasing peptide" evidence="4 5">
    <location>
        <begin position="28"/>
        <end position="54"/>
    </location>
</feature>
<feature type="peptide" id="PRO_0000003045" description="Neuromedin-C" evidence="4">
    <location>
        <begin position="45"/>
        <end position="54"/>
    </location>
</feature>
<feature type="propeptide" id="PRO_0000455541" evidence="4 5">
    <location>
        <begin position="58"/>
        <end position="164"/>
    </location>
</feature>
<feature type="modified residue" description="Methionine amide" evidence="4">
    <location>
        <position position="54"/>
    </location>
</feature>
<accession>P01295</accession>
<accession>A0A3Q2U7K9</accession>
<comment type="function">
    <text evidence="2 4">Stimulates the release of gastrin and other gastrointestinal hormones (By similarity). Stimulates pancreatic protein and fluid secretion, and increases acid secretion from the avian proventriculus (PubMed:2297533).</text>
</comment>
<comment type="subcellular location">
    <subcellularLocation>
        <location evidence="1">Secreted</location>
    </subcellularLocation>
    <subcellularLocation>
        <location evidence="3">Cytoplasmic vesicle</location>
        <location evidence="3">Secretory vesicle lumen</location>
    </subcellularLocation>
</comment>
<comment type="similarity">
    <text evidence="6">Belongs to the bombesin/neuromedin-B/ranatensin family.</text>
</comment>
<organism>
    <name type="scientific">Gallus gallus</name>
    <name type="common">Chicken</name>
    <dbReference type="NCBI Taxonomy" id="9031"/>
    <lineage>
        <taxon>Eukaryota</taxon>
        <taxon>Metazoa</taxon>
        <taxon>Chordata</taxon>
        <taxon>Craniata</taxon>
        <taxon>Vertebrata</taxon>
        <taxon>Euteleostomi</taxon>
        <taxon>Archelosauria</taxon>
        <taxon>Archosauria</taxon>
        <taxon>Dinosauria</taxon>
        <taxon>Saurischia</taxon>
        <taxon>Theropoda</taxon>
        <taxon>Coelurosauria</taxon>
        <taxon>Aves</taxon>
        <taxon>Neognathae</taxon>
        <taxon>Galloanserae</taxon>
        <taxon>Galliformes</taxon>
        <taxon>Phasianidae</taxon>
        <taxon>Phasianinae</taxon>
        <taxon>Gallus</taxon>
    </lineage>
</organism>
<dbReference type="EMBL" id="AC191339">
    <property type="status" value="NOT_ANNOTATED_CDS"/>
    <property type="molecule type" value="Genomic_DNA"/>
</dbReference>
<dbReference type="PIR" id="A01563">
    <property type="entry name" value="RHCHA"/>
</dbReference>
<dbReference type="STRING" id="9031.ENSGALP00000070188"/>
<dbReference type="PaxDb" id="9031-ENSGALP00000041621"/>
<dbReference type="VEuPathDB" id="HostDB:geneid_425213"/>
<dbReference type="eggNOG" id="ENOG502S4DG">
    <property type="taxonomic scope" value="Eukaryota"/>
</dbReference>
<dbReference type="HOGENOM" id="CLU_144892_0_0_1"/>
<dbReference type="InParanoid" id="P01295"/>
<dbReference type="OrthoDB" id="9879745at2759"/>
<dbReference type="Reactome" id="R-GGA-375276">
    <property type="pathway name" value="Peptide ligand-binding receptors"/>
</dbReference>
<dbReference type="Reactome" id="R-GGA-381771">
    <property type="pathway name" value="Synthesis, secretion, and inactivation of Glucagon-like Peptide-1 (GLP-1)"/>
</dbReference>
<dbReference type="Reactome" id="R-GGA-416476">
    <property type="pathway name" value="G alpha (q) signalling events"/>
</dbReference>
<dbReference type="PRO" id="PR:P01295"/>
<dbReference type="Proteomes" id="UP000000539">
    <property type="component" value="Chromosome Z"/>
</dbReference>
<dbReference type="Bgee" id="ENSGALG00000040959">
    <property type="expression patterns" value="Expressed in spermatocyte and 8 other cell types or tissues"/>
</dbReference>
<dbReference type="GO" id="GO:0005615">
    <property type="term" value="C:extracellular space"/>
    <property type="evidence" value="ECO:0000250"/>
    <property type="project" value="UniProtKB"/>
</dbReference>
<dbReference type="GO" id="GO:0034774">
    <property type="term" value="C:secretory granule lumen"/>
    <property type="evidence" value="ECO:0000250"/>
    <property type="project" value="UniProtKB"/>
</dbReference>
<dbReference type="GO" id="GO:0005184">
    <property type="term" value="F:neuropeptide hormone activity"/>
    <property type="evidence" value="ECO:0000318"/>
    <property type="project" value="GO_Central"/>
</dbReference>
<dbReference type="GO" id="GO:0007218">
    <property type="term" value="P:neuropeptide signaling pathway"/>
    <property type="evidence" value="ECO:0000318"/>
    <property type="project" value="GO_Central"/>
</dbReference>
<dbReference type="GO" id="GO:0090277">
    <property type="term" value="P:positive regulation of peptide hormone secretion"/>
    <property type="evidence" value="ECO:0000250"/>
    <property type="project" value="UniProtKB"/>
</dbReference>
<dbReference type="GO" id="GO:1900738">
    <property type="term" value="P:positive regulation of phospholipase C-activating G protein-coupled receptor signaling pathway"/>
    <property type="evidence" value="ECO:0000250"/>
    <property type="project" value="UniProtKB"/>
</dbReference>
<dbReference type="InterPro" id="IPR000874">
    <property type="entry name" value="Bombesin"/>
</dbReference>
<dbReference type="PANTHER" id="PTHR16866">
    <property type="entry name" value="GASTRIN-RELEASING PEPTIDE"/>
    <property type="match status" value="1"/>
</dbReference>
<dbReference type="PANTHER" id="PTHR16866:SF2">
    <property type="entry name" value="GASTRIN-RELEASING PEPTIDE"/>
    <property type="match status" value="1"/>
</dbReference>
<dbReference type="Pfam" id="PF02044">
    <property type="entry name" value="Bombesin"/>
    <property type="match status" value="1"/>
</dbReference>
<dbReference type="PROSITE" id="PS00257">
    <property type="entry name" value="BOMBESIN"/>
    <property type="match status" value="1"/>
</dbReference>